<feature type="chain" id="PRO_0000093364" description="ATP-binding cassette sub-family C member 5">
    <location>
        <begin position="1"/>
        <end position="1436"/>
    </location>
</feature>
<feature type="transmembrane region" description="Helical" evidence="4">
    <location>
        <begin position="179"/>
        <end position="199"/>
    </location>
</feature>
<feature type="transmembrane region" description="Helical" evidence="4">
    <location>
        <begin position="219"/>
        <end position="239"/>
    </location>
</feature>
<feature type="transmembrane region" description="Helical" evidence="4">
    <location>
        <begin position="296"/>
        <end position="316"/>
    </location>
</feature>
<feature type="transmembrane region" description="Helical" evidence="4">
    <location>
        <begin position="317"/>
        <end position="337"/>
    </location>
</feature>
<feature type="transmembrane region" description="Helical" evidence="4">
    <location>
        <begin position="400"/>
        <end position="420"/>
    </location>
</feature>
<feature type="transmembrane region" description="Helical" evidence="4">
    <location>
        <begin position="426"/>
        <end position="446"/>
    </location>
</feature>
<feature type="transmembrane region" description="Helical" evidence="4">
    <location>
        <begin position="608"/>
        <end position="628"/>
    </location>
</feature>
<feature type="transmembrane region" description="Helical" evidence="4">
    <location>
        <begin position="847"/>
        <end position="867"/>
    </location>
</feature>
<feature type="transmembrane region" description="Helical" evidence="4">
    <location>
        <begin position="916"/>
        <end position="936"/>
    </location>
</feature>
<feature type="transmembrane region" description="Helical" evidence="4">
    <location>
        <begin position="996"/>
        <end position="1016"/>
    </location>
</feature>
<feature type="transmembrane region" description="Helical" evidence="4">
    <location>
        <begin position="1017"/>
        <end position="1037"/>
    </location>
</feature>
<feature type="transmembrane region" description="Helical" evidence="4">
    <location>
        <begin position="1101"/>
        <end position="1121"/>
    </location>
</feature>
<feature type="transmembrane region" description="Helical" evidence="4">
    <location>
        <begin position="1126"/>
        <end position="1146"/>
    </location>
</feature>
<feature type="domain" description="ABC transmembrane type-1 1" evidence="4">
    <location>
        <begin position="179"/>
        <end position="459"/>
    </location>
</feature>
<feature type="domain" description="ABC transporter 1" evidence="3">
    <location>
        <begin position="562"/>
        <end position="783"/>
    </location>
</feature>
<feature type="domain" description="ABC transmembrane type-1 2" evidence="4">
    <location>
        <begin position="858"/>
        <end position="1154"/>
    </location>
</feature>
<feature type="domain" description="ABC transporter 2" evidence="3">
    <location>
        <begin position="1192"/>
        <end position="1426"/>
    </location>
</feature>
<feature type="region of interest" description="Disordered" evidence="5">
    <location>
        <begin position="1"/>
        <end position="41"/>
    </location>
</feature>
<feature type="region of interest" description="Disordered" evidence="5">
    <location>
        <begin position="501"/>
        <end position="569"/>
    </location>
</feature>
<feature type="region of interest" description="Disordered" evidence="5">
    <location>
        <begin position="798"/>
        <end position="822"/>
    </location>
</feature>
<feature type="compositionally biased region" description="Basic and acidic residues" evidence="5">
    <location>
        <begin position="18"/>
        <end position="41"/>
    </location>
</feature>
<feature type="compositionally biased region" description="Polar residues" evidence="5">
    <location>
        <begin position="501"/>
        <end position="511"/>
    </location>
</feature>
<feature type="compositionally biased region" description="Basic residues" evidence="5">
    <location>
        <begin position="514"/>
        <end position="529"/>
    </location>
</feature>
<feature type="compositionally biased region" description="Basic and acidic residues" evidence="5">
    <location>
        <begin position="545"/>
        <end position="559"/>
    </location>
</feature>
<feature type="binding site" evidence="3">
    <location>
        <begin position="595"/>
        <end position="602"/>
    </location>
    <ligand>
        <name>ATP</name>
        <dbReference type="ChEBI" id="CHEBI:30616"/>
        <label>1</label>
    </ligand>
</feature>
<feature type="binding site" evidence="3">
    <location>
        <begin position="1226"/>
        <end position="1233"/>
    </location>
    <ligand>
        <name>ATP</name>
        <dbReference type="ChEBI" id="CHEBI:30616"/>
        <label>2</label>
    </ligand>
</feature>
<feature type="modified residue" description="Phosphoserine" evidence="1">
    <location>
        <position position="14"/>
    </location>
</feature>
<feature type="modified residue" description="Phosphoserine" evidence="1">
    <location>
        <position position="19"/>
    </location>
</feature>
<feature type="modified residue" description="Phosphoserine" evidence="14 15">
    <location>
        <position position="43"/>
    </location>
</feature>
<feature type="modified residue" description="Phosphoserine" evidence="1">
    <location>
        <position position="60"/>
    </location>
</feature>
<feature type="modified residue" description="Phosphoserine" evidence="15">
    <location>
        <position position="505"/>
    </location>
</feature>
<feature type="modified residue" description="Phosphoserine" evidence="15">
    <location>
        <position position="509"/>
    </location>
</feature>
<feature type="modified residue" description="Phosphothreonine" evidence="15">
    <location>
        <position position="513"/>
    </location>
</feature>
<feature type="glycosylation site" description="N-linked (GlcNAc...) asparagine" evidence="2">
    <location>
        <position position="494"/>
    </location>
</feature>
<feature type="glycosylation site" description="N-linked (GlcNAc...) asparagine" evidence="2">
    <location>
        <position position="636"/>
    </location>
</feature>
<feature type="glycosylation site" description="N-linked (GlcNAc...) asparagine" evidence="2">
    <location>
        <position position="684"/>
    </location>
</feature>
<feature type="glycosylation site" description="N-linked (GlcNAc...) asparagine" evidence="2">
    <location>
        <position position="889"/>
    </location>
</feature>
<feature type="glycosylation site" description="N-linked (GlcNAc...) asparagine" evidence="2">
    <location>
        <position position="896"/>
    </location>
</feature>
<feature type="glycosylation site" description="N-linked (GlcNAc...) asparagine" evidence="2">
    <location>
        <position position="1043"/>
    </location>
</feature>
<feature type="glycosylation site" description="N-linked (GlcNAc...) asparagine" evidence="2">
    <location>
        <position position="1328"/>
    </location>
</feature>
<feature type="glycosylation site" description="N-linked (GlcNAc...) asparagine" evidence="2">
    <location>
        <position position="1416"/>
    </location>
</feature>
<feature type="sequence conflict" description="In Ref. 1; BAA76609." evidence="12" ref="1">
    <original>S</original>
    <variation>C</variation>
    <location>
        <position position="146"/>
    </location>
</feature>
<feature type="sequence conflict" description="In Ref. 1; BAA76609." evidence="12" ref="1">
    <original>V</original>
    <variation>M</variation>
    <location>
        <position position="200"/>
    </location>
</feature>
<feature type="sequence conflict" description="In Ref. 1; BAA76609." evidence="12" ref="1">
    <original>Y</original>
    <variation>C</variation>
    <location>
        <position position="217"/>
    </location>
</feature>
<feature type="sequence conflict" description="In Ref. 1; BAA76609." evidence="12" ref="1">
    <original>V</original>
    <variation>I</variation>
    <location>
        <position position="230"/>
    </location>
</feature>
<feature type="sequence conflict" description="In Ref. 1; BAA76609." evidence="12" ref="1">
    <original>C</original>
    <variation>R</variation>
    <location>
        <position position="347"/>
    </location>
</feature>
<feature type="sequence conflict" description="In Ref. 1; BAA76609." evidence="12" ref="1">
    <original>A</original>
    <variation>P</variation>
    <location>
        <position position="1098"/>
    </location>
</feature>
<feature type="sequence conflict" description="In Ref. 1; BAA76609." evidence="12" ref="1">
    <original>L</original>
    <variation>I</variation>
    <location>
        <position position="1103"/>
    </location>
</feature>
<feature type="sequence conflict" description="In Ref. 1; BAA76609." evidence="12" ref="1">
    <original>T</original>
    <variation>S</variation>
    <location>
        <position position="1111"/>
    </location>
</feature>
<feature type="sequence conflict" description="In Ref. 1; BAA76609." evidence="12" ref="1">
    <original>LMHGQIP</original>
    <variation>SGMARSL</variation>
    <location>
        <begin position="1118"/>
        <end position="1124"/>
    </location>
</feature>
<feature type="sequence conflict" description="In Ref. 1; BAA76609." evidence="12" ref="1">
    <original>T</original>
    <variation>I</variation>
    <location>
        <position position="1139"/>
    </location>
</feature>
<proteinExistence type="evidence at protein level"/>
<organism>
    <name type="scientific">Mus musculus</name>
    <name type="common">Mouse</name>
    <dbReference type="NCBI Taxonomy" id="10090"/>
    <lineage>
        <taxon>Eukaryota</taxon>
        <taxon>Metazoa</taxon>
        <taxon>Chordata</taxon>
        <taxon>Craniata</taxon>
        <taxon>Vertebrata</taxon>
        <taxon>Euteleostomi</taxon>
        <taxon>Mammalia</taxon>
        <taxon>Eutheria</taxon>
        <taxon>Euarchontoglires</taxon>
        <taxon>Glires</taxon>
        <taxon>Rodentia</taxon>
        <taxon>Myomorpha</taxon>
        <taxon>Muroidea</taxon>
        <taxon>Muridae</taxon>
        <taxon>Murinae</taxon>
        <taxon>Mus</taxon>
        <taxon>Mus</taxon>
    </lineage>
</organism>
<name>MRP5_MOUSE</name>
<evidence type="ECO:0000250" key="1">
    <source>
        <dbReference type="UniProtKB" id="O15440"/>
    </source>
</evidence>
<evidence type="ECO:0000255" key="2"/>
<evidence type="ECO:0000255" key="3">
    <source>
        <dbReference type="PROSITE-ProRule" id="PRU00434"/>
    </source>
</evidence>
<evidence type="ECO:0000255" key="4">
    <source>
        <dbReference type="PROSITE-ProRule" id="PRU00441"/>
    </source>
</evidence>
<evidence type="ECO:0000256" key="5">
    <source>
        <dbReference type="SAM" id="MobiDB-lite"/>
    </source>
</evidence>
<evidence type="ECO:0000269" key="6">
    <source>
    </source>
</evidence>
<evidence type="ECO:0000269" key="7">
    <source>
    </source>
</evidence>
<evidence type="ECO:0000269" key="8">
    <source>
    </source>
</evidence>
<evidence type="ECO:0000269" key="9">
    <source>
    </source>
</evidence>
<evidence type="ECO:0000269" key="10">
    <source>
    </source>
</evidence>
<evidence type="ECO:0000303" key="11">
    <source>
    </source>
</evidence>
<evidence type="ECO:0000305" key="12"/>
<evidence type="ECO:0000312" key="13">
    <source>
        <dbReference type="MGI" id="MGI:1351644"/>
    </source>
</evidence>
<evidence type="ECO:0007744" key="14">
    <source>
    </source>
</evidence>
<evidence type="ECO:0007744" key="15">
    <source>
    </source>
</evidence>
<protein>
    <recommendedName>
        <fullName>ATP-binding cassette sub-family C member 5</fullName>
        <ecNumber evidence="7">7.6.2.-</ecNumber>
        <ecNumber evidence="1">7.6.2.2</ecNumber>
    </recommendedName>
    <alternativeName>
        <fullName>Multi-specific organic anion transporter C</fullName>
        <shortName>MOAT-C</shortName>
    </alternativeName>
    <alternativeName>
        <fullName evidence="11">Multidrug resistance-associated protein 5</fullName>
    </alternativeName>
    <alternativeName>
        <fullName>SMRP</fullName>
    </alternativeName>
</protein>
<accession>Q9R1X5</accession>
<accession>O88284</accession>
<accession>Q5CZY2</accession>
<comment type="function">
    <text evidence="1 7 8 9 10">ATP-dependent transporter of the ATP-binding cassette (ABC) family that actively extrudes physiological compounds, and xenobiotics from cells. Mediates ATP-dependent transport of endogenous metabolites like cyclic nucleotides, such as cAMP and cGMP, folic acid and N-lactoyl-amino acids (in vitro) (By similarity) (PubMed:17229149). Acts also as a general glutamate conjugate and analog transporter that can limit the brain levels of endogenous metabolites, drugs, and toxins (PubMed:26515061). Confers resistance to the antiviral agent PMEA (By similarity). Able to transport several anticancer drugs including methotrexate, and nucleotide analogs in vitro, however it does with low affinity (By similarity). Acts as a heme transporter required for the translocation of cytosolic heme to the secretory pathway (PubMed:24836561). May play a role in energy metabolism by regulating the glucagon-like peptide 1 (GLP-1) secretion from enteroendocrine cells (PubMed:31338999).</text>
</comment>
<comment type="catalytic activity">
    <reaction evidence="1">
        <text>ATP + H2O + xenobioticSide 1 = ADP + phosphate + xenobioticSide 2.</text>
        <dbReference type="EC" id="7.6.2.2"/>
    </reaction>
</comment>
<comment type="catalytic activity">
    <reaction evidence="7">
        <text>3',5'-cyclic GMP(in) + ATP + H2O = 3',5'-cyclic GMP(out) + ADP + phosphate + H(+)</text>
        <dbReference type="Rhea" id="RHEA:66188"/>
        <dbReference type="ChEBI" id="CHEBI:15377"/>
        <dbReference type="ChEBI" id="CHEBI:15378"/>
        <dbReference type="ChEBI" id="CHEBI:30616"/>
        <dbReference type="ChEBI" id="CHEBI:43474"/>
        <dbReference type="ChEBI" id="CHEBI:57746"/>
        <dbReference type="ChEBI" id="CHEBI:456216"/>
    </reaction>
    <physiologicalReaction direction="left-to-right" evidence="7">
        <dbReference type="Rhea" id="RHEA:66189"/>
    </physiologicalReaction>
</comment>
<comment type="catalytic activity">
    <reaction evidence="1">
        <text>3',5'-cyclic AMP(in) + ATP + H2O = 3',5'-cyclic AMP(out) + ADP + phosphate + H(+)</text>
        <dbReference type="Rhea" id="RHEA:66184"/>
        <dbReference type="ChEBI" id="CHEBI:15377"/>
        <dbReference type="ChEBI" id="CHEBI:15378"/>
        <dbReference type="ChEBI" id="CHEBI:30616"/>
        <dbReference type="ChEBI" id="CHEBI:43474"/>
        <dbReference type="ChEBI" id="CHEBI:58165"/>
        <dbReference type="ChEBI" id="CHEBI:456216"/>
    </reaction>
    <physiologicalReaction direction="left-to-right" evidence="1">
        <dbReference type="Rhea" id="RHEA:66185"/>
    </physiologicalReaction>
</comment>
<comment type="catalytic activity">
    <reaction evidence="1">
        <text>N-acetyl-L-aspartyl-L-glutamate(in) + ATP + H2O = N-acetyl-L-aspartyl-L-glutamate(out) + ADP + phosphate + H(+)</text>
        <dbReference type="Rhea" id="RHEA:66728"/>
        <dbReference type="ChEBI" id="CHEBI:15377"/>
        <dbReference type="ChEBI" id="CHEBI:15378"/>
        <dbReference type="ChEBI" id="CHEBI:30616"/>
        <dbReference type="ChEBI" id="CHEBI:43474"/>
        <dbReference type="ChEBI" id="CHEBI:76931"/>
        <dbReference type="ChEBI" id="CHEBI:456216"/>
    </reaction>
    <physiologicalReaction direction="left-to-right" evidence="1">
        <dbReference type="Rhea" id="RHEA:66729"/>
    </physiologicalReaction>
</comment>
<comment type="catalytic activity">
    <reaction evidence="1">
        <text>N-acetyl-L-aspartyl-L-glutamyl-L-glutamate(in) + ATP + H2O = N-acetyl-L-aspartyl-L-glutamyl-L-glutamate(out) + ADP + phosphate + H(+)</text>
        <dbReference type="Rhea" id="RHEA:66732"/>
        <dbReference type="ChEBI" id="CHEBI:15377"/>
        <dbReference type="ChEBI" id="CHEBI:15378"/>
        <dbReference type="ChEBI" id="CHEBI:30616"/>
        <dbReference type="ChEBI" id="CHEBI:43474"/>
        <dbReference type="ChEBI" id="CHEBI:76935"/>
        <dbReference type="ChEBI" id="CHEBI:456216"/>
    </reaction>
    <physiologicalReaction direction="left-to-right" evidence="1">
        <dbReference type="Rhea" id="RHEA:66733"/>
    </physiologicalReaction>
</comment>
<comment type="catalytic activity">
    <reaction evidence="1">
        <text>N-acetyl-L-glutamate(in) + ATP + H2O = N-acetyl-L-glutamate(out) + ADP + phosphate + H(+)</text>
        <dbReference type="Rhea" id="RHEA:66740"/>
        <dbReference type="ChEBI" id="CHEBI:15377"/>
        <dbReference type="ChEBI" id="CHEBI:15378"/>
        <dbReference type="ChEBI" id="CHEBI:30616"/>
        <dbReference type="ChEBI" id="CHEBI:43474"/>
        <dbReference type="ChEBI" id="CHEBI:44337"/>
        <dbReference type="ChEBI" id="CHEBI:456216"/>
    </reaction>
</comment>
<comment type="catalytic activity">
    <reaction evidence="1">
        <text>N-acetyl-L-aspartate(in) + ATP + H2O = N-acetyl-L-aspartate(out) + ADP + phosphate + H(+)</text>
        <dbReference type="Rhea" id="RHEA:66744"/>
        <dbReference type="ChEBI" id="CHEBI:15377"/>
        <dbReference type="ChEBI" id="CHEBI:15378"/>
        <dbReference type="ChEBI" id="CHEBI:16953"/>
        <dbReference type="ChEBI" id="CHEBI:30616"/>
        <dbReference type="ChEBI" id="CHEBI:43474"/>
        <dbReference type="ChEBI" id="CHEBI:456216"/>
    </reaction>
    <physiologicalReaction direction="left-to-right" evidence="1">
        <dbReference type="Rhea" id="RHEA:66745"/>
    </physiologicalReaction>
</comment>
<comment type="catalytic activity">
    <reaction evidence="1">
        <text>(2S)-2-[5-amino-1-(beta-D-ribosyl)imidazole-4-carboxamido]succinate(in) + ATP + H2O = (2S)-2-[5-amino-1-(beta-D-ribosyl)imidazole-4-carboxamido]succinate(out) + ADP + phosphate + H(+)</text>
        <dbReference type="Rhea" id="RHEA:66752"/>
        <dbReference type="ChEBI" id="CHEBI:15377"/>
        <dbReference type="ChEBI" id="CHEBI:15378"/>
        <dbReference type="ChEBI" id="CHEBI:30616"/>
        <dbReference type="ChEBI" id="CHEBI:43474"/>
        <dbReference type="ChEBI" id="CHEBI:167466"/>
        <dbReference type="ChEBI" id="CHEBI:456216"/>
    </reaction>
    <physiologicalReaction direction="left-to-right" evidence="1">
        <dbReference type="Rhea" id="RHEA:66753"/>
    </physiologicalReaction>
</comment>
<comment type="catalytic activity">
    <reaction evidence="1">
        <text>domoate(in) + ATP + H2O = domoate(out) + ADP + phosphate + H(+)</text>
        <dbReference type="Rhea" id="RHEA:66756"/>
        <dbReference type="ChEBI" id="CHEBI:15377"/>
        <dbReference type="ChEBI" id="CHEBI:15378"/>
        <dbReference type="ChEBI" id="CHEBI:30616"/>
        <dbReference type="ChEBI" id="CHEBI:43474"/>
        <dbReference type="ChEBI" id="CHEBI:167470"/>
        <dbReference type="ChEBI" id="CHEBI:456216"/>
    </reaction>
</comment>
<comment type="catalytic activity">
    <reaction evidence="1">
        <text>beta-citrylglutamate(in) + ATP + H2O = beta-citrylglutamate(out) + ADP + phosphate + H(+)</text>
        <dbReference type="Rhea" id="RHEA:66736"/>
        <dbReference type="ChEBI" id="CHEBI:15377"/>
        <dbReference type="ChEBI" id="CHEBI:15378"/>
        <dbReference type="ChEBI" id="CHEBI:30616"/>
        <dbReference type="ChEBI" id="CHEBI:43474"/>
        <dbReference type="ChEBI" id="CHEBI:76942"/>
        <dbReference type="ChEBI" id="CHEBI:456216"/>
    </reaction>
</comment>
<comment type="catalytic activity">
    <reaction evidence="1">
        <text>kainate(in) + ATP + H2O = kainate(out) + ADP + phosphate + H(+)</text>
        <dbReference type="Rhea" id="RHEA:66760"/>
        <dbReference type="ChEBI" id="CHEBI:15377"/>
        <dbReference type="ChEBI" id="CHEBI:15378"/>
        <dbReference type="ChEBI" id="CHEBI:30616"/>
        <dbReference type="ChEBI" id="CHEBI:43474"/>
        <dbReference type="ChEBI" id="CHEBI:156548"/>
        <dbReference type="ChEBI" id="CHEBI:456216"/>
    </reaction>
</comment>
<comment type="catalytic activity">
    <reaction evidence="1">
        <text>N-[(S)-lactoyl]-L-phenylalanine(in) + ATP + H2O = N-[(S)-lactoyl]-L-phenylalanine(out) + ADP + phosphate + H(+)</text>
        <dbReference type="Rhea" id="RHEA:66720"/>
        <dbReference type="ChEBI" id="CHEBI:15377"/>
        <dbReference type="ChEBI" id="CHEBI:15378"/>
        <dbReference type="ChEBI" id="CHEBI:30616"/>
        <dbReference type="ChEBI" id="CHEBI:43474"/>
        <dbReference type="ChEBI" id="CHEBI:167456"/>
        <dbReference type="ChEBI" id="CHEBI:456216"/>
    </reaction>
</comment>
<comment type="catalytic activity">
    <reaction evidence="1">
        <text>folate(in) + ATP + H2O = folate(out) + ADP + phosphate + H(+)</text>
        <dbReference type="Rhea" id="RHEA:66764"/>
        <dbReference type="ChEBI" id="CHEBI:15377"/>
        <dbReference type="ChEBI" id="CHEBI:15378"/>
        <dbReference type="ChEBI" id="CHEBI:30616"/>
        <dbReference type="ChEBI" id="CHEBI:43474"/>
        <dbReference type="ChEBI" id="CHEBI:62501"/>
        <dbReference type="ChEBI" id="CHEBI:456216"/>
    </reaction>
</comment>
<comment type="biophysicochemical properties">
    <kinetics>
        <KM evidence="7">9 mM for cGMP</KM>
    </kinetics>
</comment>
<comment type="subcellular location">
    <subcellularLocation>
        <location evidence="1">Basolateral cell membrane</location>
        <topology evidence="2">Multi-pass membrane protein</topology>
    </subcellularLocation>
    <subcellularLocation>
        <location evidence="1">Golgi apparatus lumen</location>
    </subcellularLocation>
    <subcellularLocation>
        <location evidence="1">Endosome membrane</location>
    </subcellularLocation>
    <subcellularLocation>
        <location evidence="8">Cytoplasmic granule</location>
    </subcellularLocation>
    <subcellularLocation>
        <location evidence="6">Apical cell membrane</location>
        <topology evidence="2">Multi-pass membrane protein</topology>
    </subcellularLocation>
    <text evidence="1 6">In most cells, routes to the basolateral plasma membrane, but in the brain capillary endothelial cells that form the blood-brain barrier, resides in the apical membrane.</text>
</comment>
<comment type="tissue specificity">
    <text evidence="6">Detected in brain endothelial cells.</text>
</comment>
<comment type="disruption phenotype">
    <text evidence="9 10">Mrp5 knockout mice are viable with no overt phenotypes, deficient mice accumulate endogenous glutamate conjugates in several tissues, including the inhibitory neuropeptides N-acetylaspartylglutamate (NAAG) and N-acetylaspartyldiglutamate (NAAG2), but brain in particular (PubMed:26515061). Abcc5-/- mice show lower white and brown adipose tissue and increased glucagon-like peptide 1 (GLP-1) release from enteroendocrine cells of the small intestine, and are more insulin sensitive (PubMed:31338999).</text>
</comment>
<comment type="miscellaneous">
    <text evidence="1 7">Although other labs have confirmed the ability of ABCC5 to transport cGMP in an ATP-dependent manner, they obtained a much lower affinity for this substrate (By similarity) (PubMed:17229149). The authors conclude that ABCC5 is a low-affinity cyclic nucleotide transporter and a major function in cGMP excretion is unlikely (By similarity) (PubMed:17229149).</text>
</comment>
<comment type="similarity">
    <text evidence="12">Belongs to the ABC transporter superfamily. ABCC family. Conjugate transporter (TC 3.A.1.208) subfamily.</text>
</comment>
<sequence length="1436" mass="161125">MKDIDMGKEYIIPSPGYRSDRDRSAVPGQHRDPEEPRFRRTRSLECQDALETAARVEGLSLDISVHSHLQILDEEHSKGKYHHGLSVLKPFRTTTKHQHPVDNAGLFSYMTFSWLSPLARVVHKKGELLMEDVWPLSKYESSDVNSRRLERLWQEELNEVGPDAASLRRVVWIFCRTRLILSIVCLMITQLAGFSGPAFVVKHLLEYTQATESNLQYSLLLVLGLLLTEVVRSWSLALTWALNYRTGVRLRGAILTMAFKKILKLKNIKEKSLGELINICSNDGQRMFEAAAVGSLLAGGPVVAILGMIYNVIILGPTGFLGSAVFILFYPAMMFVSRLTAYFRRKCVAATDDRVQKMNEVLTYIKFIKMYAWVKAFSQCVQKIREEERRILEKAGYFQSITVGVAPIVVVIASVVTFSVHMTLGFHLTAAQAFTVVTVFNSMTFALKVTPFSVKSLSEASVAVDRFKSLFLMEEVHMIKNKPASPHIKIEMKNATLAWDSSHSSIQNSPKLTPKMKKDKRATRGKKEKSRQLQHTEHQAVLAEQKGHLLLDSDERPSPEEEEGKQIHTGSLRLQRTLYNIDLEIEEGKLVGICGSVGSGKTSLVSAILGQMTLLEGSIAVSGTFAYVAQQAWILNATLRDNILFGKEFDEERYNSVLNSCCLRPDLAILPNSDLTEIGERGANLSGGQRQRISLARALYSDRSIYILDDPLSALDAHVGNHIFNSAIRKRLKSKTVLFVTHQLQYLVDCDEVIFMKEGCITERGTHEELMNLNGDYATIFNNLLLGETPPVEINSKKEATGSQKSQDKGPKPGSVKKEKAVKSEEGQLVQVEEKGQGSVPWSVYWVYIQAAGGPLAFLVIMVLFMLNVGSTAFSTWWLSYWIKQGSGNSTVYQGNRSFVSDSMKDNPFMQYYASIYALSMAVMLILKAIRGVVFVKGTLRASSRLHDELFRRILRSPMKFFDTTPTGRILNRFSKDMDEVDVRLPFQAEMFIQNVILVFFCVGMIAGVFPWFLVAVGPLLILFSLLHIVSRVLIRELKRLDNITQSPFLSHITSSIQGLATIHAYNKRQEFLHRYQELLDDNQAPFFLFTCAMRWLAVRLDLISIALITTTGLMIVLMHGQIPSAYAGLAISYAVQLTGLFQFTVRLASETEARFTSVERINHYIKTLSLEAPARIKNKAPPHDWPQEGEVTFENAEMRYRENLPLVLKKVSFTIKPKEKIGIVGRTGSGKSSLGMALFRLVELSGGCIKIDGIRISDIGLADLRSKLAIIPQEPVLFSGTVRSNLDPFNQYTEDQIWDALERTHMKECIAQLPLKLESEVMENGDNFSVGERQLLCIARALLRHCKILILDEATAAMDTETDLLIQETIREAFADCTMLTIAHRLHTVLGSDRIMVLAQGQVVEFDTPSVLLSNDSSRFYAMFAAAENKVAVKG</sequence>
<gene>
    <name evidence="13" type="primary">Abcc5</name>
    <name type="synonym">Abcc5a</name>
    <name evidence="11" type="synonym">Mrp5</name>
</gene>
<dbReference type="EC" id="7.6.2.-" evidence="7"/>
<dbReference type="EC" id="7.6.2.2" evidence="1"/>
<dbReference type="EMBL" id="AB019003">
    <property type="protein sequence ID" value="BAA76609.1"/>
    <property type="molecule type" value="mRNA"/>
</dbReference>
<dbReference type="EMBL" id="AB012090">
    <property type="protein sequence ID" value="BAA32782.1"/>
    <property type="molecule type" value="mRNA"/>
</dbReference>
<dbReference type="EMBL" id="CH466521">
    <property type="protein sequence ID" value="EDK97565.1"/>
    <property type="molecule type" value="Genomic_DNA"/>
</dbReference>
<dbReference type="EMBL" id="BC090629">
    <property type="protein sequence ID" value="AAH90629.1"/>
    <property type="molecule type" value="mRNA"/>
</dbReference>
<dbReference type="CCDS" id="CCDS28045.1"/>
<dbReference type="RefSeq" id="NP_038818.2">
    <property type="nucleotide sequence ID" value="NM_013790.2"/>
</dbReference>
<dbReference type="RefSeq" id="XP_006522271.1">
    <property type="nucleotide sequence ID" value="XM_006522208.4"/>
</dbReference>
<dbReference type="SMR" id="Q9R1X5"/>
<dbReference type="BioGRID" id="205221">
    <property type="interactions" value="2"/>
</dbReference>
<dbReference type="FunCoup" id="Q9R1X5">
    <property type="interactions" value="828"/>
</dbReference>
<dbReference type="STRING" id="10090.ENSMUSP00000078158"/>
<dbReference type="GlyCosmos" id="Q9R1X5">
    <property type="glycosylation" value="8 sites, No reported glycans"/>
</dbReference>
<dbReference type="GlyGen" id="Q9R1X5">
    <property type="glycosylation" value="10 sites, 1 O-linked glycan (2 sites)"/>
</dbReference>
<dbReference type="iPTMnet" id="Q9R1X5"/>
<dbReference type="PhosphoSitePlus" id="Q9R1X5"/>
<dbReference type="jPOST" id="Q9R1X5"/>
<dbReference type="PaxDb" id="10090-ENSMUSP00000078158"/>
<dbReference type="PeptideAtlas" id="Q9R1X5"/>
<dbReference type="ProteomicsDB" id="291410"/>
<dbReference type="Pumba" id="Q9R1X5"/>
<dbReference type="Antibodypedia" id="18937">
    <property type="antibodies" value="423 antibodies from 37 providers"/>
</dbReference>
<dbReference type="DNASU" id="27416"/>
<dbReference type="Ensembl" id="ENSMUST00000079158.13">
    <property type="protein sequence ID" value="ENSMUSP00000078158.7"/>
    <property type="gene ID" value="ENSMUSG00000022822.18"/>
</dbReference>
<dbReference type="GeneID" id="27416"/>
<dbReference type="KEGG" id="mmu:27416"/>
<dbReference type="UCSC" id="uc007ypp.1">
    <property type="organism name" value="mouse"/>
</dbReference>
<dbReference type="AGR" id="MGI:1351644"/>
<dbReference type="CTD" id="10057"/>
<dbReference type="MGI" id="MGI:1351644">
    <property type="gene designation" value="Abcc5"/>
</dbReference>
<dbReference type="VEuPathDB" id="HostDB:ENSMUSG00000022822"/>
<dbReference type="eggNOG" id="KOG0054">
    <property type="taxonomic scope" value="Eukaryota"/>
</dbReference>
<dbReference type="GeneTree" id="ENSGT00940000155470"/>
<dbReference type="HOGENOM" id="CLU_000604_27_3_1"/>
<dbReference type="InParanoid" id="Q9R1X5"/>
<dbReference type="OMA" id="QVTDAWT"/>
<dbReference type="OrthoDB" id="6500128at2759"/>
<dbReference type="PhylomeDB" id="Q9R1X5"/>
<dbReference type="TreeFam" id="TF105202"/>
<dbReference type="Reactome" id="R-MMU-2142850">
    <property type="pathway name" value="Hyaluronan biosynthesis and export"/>
</dbReference>
<dbReference type="Reactome" id="R-MMU-382556">
    <property type="pathway name" value="ABC-family proteins mediated transport"/>
</dbReference>
<dbReference type="Reactome" id="R-MMU-9748787">
    <property type="pathway name" value="Azathioprine ADME"/>
</dbReference>
<dbReference type="Reactome" id="R-MMU-9753281">
    <property type="pathway name" value="Paracetamol ADME"/>
</dbReference>
<dbReference type="BioGRID-ORCS" id="27416">
    <property type="hits" value="1 hit in 79 CRISPR screens"/>
</dbReference>
<dbReference type="ChiTaRS" id="Abcc5">
    <property type="organism name" value="mouse"/>
</dbReference>
<dbReference type="PRO" id="PR:Q9R1X5"/>
<dbReference type="Proteomes" id="UP000000589">
    <property type="component" value="Chromosome 16"/>
</dbReference>
<dbReference type="RNAct" id="Q9R1X5">
    <property type="molecule type" value="protein"/>
</dbReference>
<dbReference type="Bgee" id="ENSMUSG00000022822">
    <property type="expression patterns" value="Expressed in superior frontal gyrus and 258 other cell types or tissues"/>
</dbReference>
<dbReference type="ExpressionAtlas" id="Q9R1X5">
    <property type="expression patterns" value="baseline and differential"/>
</dbReference>
<dbReference type="GO" id="GO:0016324">
    <property type="term" value="C:apical plasma membrane"/>
    <property type="evidence" value="ECO:0000314"/>
    <property type="project" value="UniProtKB"/>
</dbReference>
<dbReference type="GO" id="GO:0016323">
    <property type="term" value="C:basolateral plasma membrane"/>
    <property type="evidence" value="ECO:0000314"/>
    <property type="project" value="UniProtKB"/>
</dbReference>
<dbReference type="GO" id="GO:0010008">
    <property type="term" value="C:endosome membrane"/>
    <property type="evidence" value="ECO:0007669"/>
    <property type="project" value="UniProtKB-SubCell"/>
</dbReference>
<dbReference type="GO" id="GO:0005796">
    <property type="term" value="C:Golgi lumen"/>
    <property type="evidence" value="ECO:0007669"/>
    <property type="project" value="UniProtKB-SubCell"/>
</dbReference>
<dbReference type="GO" id="GO:0016020">
    <property type="term" value="C:membrane"/>
    <property type="evidence" value="ECO:0000266"/>
    <property type="project" value="MGI"/>
</dbReference>
<dbReference type="GO" id="GO:0005886">
    <property type="term" value="C:plasma membrane"/>
    <property type="evidence" value="ECO:0000315"/>
    <property type="project" value="MGI"/>
</dbReference>
<dbReference type="GO" id="GO:0140359">
    <property type="term" value="F:ABC-type transporter activity"/>
    <property type="evidence" value="ECO:0000315"/>
    <property type="project" value="MGI"/>
</dbReference>
<dbReference type="GO" id="GO:0008559">
    <property type="term" value="F:ABC-type xenobiotic transporter activity"/>
    <property type="evidence" value="ECO:0000250"/>
    <property type="project" value="UniProtKB"/>
</dbReference>
<dbReference type="GO" id="GO:0005524">
    <property type="term" value="F:ATP binding"/>
    <property type="evidence" value="ECO:0007669"/>
    <property type="project" value="UniProtKB-KW"/>
</dbReference>
<dbReference type="GO" id="GO:0016887">
    <property type="term" value="F:ATP hydrolysis activity"/>
    <property type="evidence" value="ECO:0007669"/>
    <property type="project" value="InterPro"/>
</dbReference>
<dbReference type="GO" id="GO:1901505">
    <property type="term" value="F:carbohydrate derivative transmembrane transporter activity"/>
    <property type="evidence" value="ECO:0000315"/>
    <property type="project" value="MGI"/>
</dbReference>
<dbReference type="GO" id="GO:0015562">
    <property type="term" value="F:efflux transmembrane transporter activity"/>
    <property type="evidence" value="ECO:0007669"/>
    <property type="project" value="Ensembl"/>
</dbReference>
<dbReference type="GO" id="GO:0034634">
    <property type="term" value="F:glutathione transmembrane transporter activity"/>
    <property type="evidence" value="ECO:0007669"/>
    <property type="project" value="Ensembl"/>
</dbReference>
<dbReference type="GO" id="GO:0015232">
    <property type="term" value="F:heme transmembrane transporter activity"/>
    <property type="evidence" value="ECO:0000250"/>
    <property type="project" value="UniProtKB"/>
</dbReference>
<dbReference type="GO" id="GO:0022884">
    <property type="term" value="F:macromolecule transmembrane transporter activity"/>
    <property type="evidence" value="ECO:0000315"/>
    <property type="project" value="MGI"/>
</dbReference>
<dbReference type="GO" id="GO:0015216">
    <property type="term" value="F:purine nucleotide transmembrane transporter activity"/>
    <property type="evidence" value="ECO:0007669"/>
    <property type="project" value="Ensembl"/>
</dbReference>
<dbReference type="GO" id="GO:0070730">
    <property type="term" value="P:cAMP transport"/>
    <property type="evidence" value="ECO:0007669"/>
    <property type="project" value="Ensembl"/>
</dbReference>
<dbReference type="GO" id="GO:0070731">
    <property type="term" value="P:cGMP transport"/>
    <property type="evidence" value="ECO:0007669"/>
    <property type="project" value="Ensembl"/>
</dbReference>
<dbReference type="GO" id="GO:0140115">
    <property type="term" value="P:export across plasma membrane"/>
    <property type="evidence" value="ECO:0007669"/>
    <property type="project" value="Ensembl"/>
</dbReference>
<dbReference type="GO" id="GO:0098838">
    <property type="term" value="P:folate transmembrane transport"/>
    <property type="evidence" value="ECO:0000250"/>
    <property type="project" value="UniProtKB"/>
</dbReference>
<dbReference type="GO" id="GO:0035351">
    <property type="term" value="P:heme transmembrane transport"/>
    <property type="evidence" value="ECO:0000250"/>
    <property type="project" value="UniProtKB"/>
</dbReference>
<dbReference type="GO" id="GO:0030213">
    <property type="term" value="P:hyaluronan biosynthetic process"/>
    <property type="evidence" value="ECO:0000315"/>
    <property type="project" value="MGI"/>
</dbReference>
<dbReference type="CDD" id="cd18592">
    <property type="entry name" value="ABC_6TM_MRP5_8_9_D1"/>
    <property type="match status" value="1"/>
</dbReference>
<dbReference type="CDD" id="cd18599">
    <property type="entry name" value="ABC_6TM_MRP5_8_9_D2"/>
    <property type="match status" value="1"/>
</dbReference>
<dbReference type="CDD" id="cd03250">
    <property type="entry name" value="ABCC_MRP_domain1"/>
    <property type="match status" value="1"/>
</dbReference>
<dbReference type="CDD" id="cd03244">
    <property type="entry name" value="ABCC_MRP_domain2"/>
    <property type="match status" value="1"/>
</dbReference>
<dbReference type="FunFam" id="1.20.1560.10:FF:000012">
    <property type="entry name" value="ATP binding cassette subfamily C member 5"/>
    <property type="match status" value="1"/>
</dbReference>
<dbReference type="FunFam" id="3.40.50.300:FF:000074">
    <property type="entry name" value="Multidrug resistance-associated protein 5 isoform 1"/>
    <property type="match status" value="1"/>
</dbReference>
<dbReference type="FunFam" id="1.20.1560.10:FF:000015">
    <property type="entry name" value="multidrug resistance-associated protein 5 isoform X1"/>
    <property type="match status" value="1"/>
</dbReference>
<dbReference type="FunFam" id="3.40.50.300:FF:000605">
    <property type="entry name" value="multidrug resistance-associated protein 5 isoform X1"/>
    <property type="match status" value="1"/>
</dbReference>
<dbReference type="Gene3D" id="1.20.1560.10">
    <property type="entry name" value="ABC transporter type 1, transmembrane domain"/>
    <property type="match status" value="2"/>
</dbReference>
<dbReference type="Gene3D" id="3.40.50.300">
    <property type="entry name" value="P-loop containing nucleotide triphosphate hydrolases"/>
    <property type="match status" value="2"/>
</dbReference>
<dbReference type="InterPro" id="IPR003593">
    <property type="entry name" value="AAA+_ATPase"/>
</dbReference>
<dbReference type="InterPro" id="IPR011527">
    <property type="entry name" value="ABC1_TM_dom"/>
</dbReference>
<dbReference type="InterPro" id="IPR036640">
    <property type="entry name" value="ABC1_TM_sf"/>
</dbReference>
<dbReference type="InterPro" id="IPR003439">
    <property type="entry name" value="ABC_transporter-like_ATP-bd"/>
</dbReference>
<dbReference type="InterPro" id="IPR017871">
    <property type="entry name" value="ABC_transporter-like_CS"/>
</dbReference>
<dbReference type="InterPro" id="IPR050173">
    <property type="entry name" value="ABC_transporter_C-like"/>
</dbReference>
<dbReference type="InterPro" id="IPR027417">
    <property type="entry name" value="P-loop_NTPase"/>
</dbReference>
<dbReference type="PANTHER" id="PTHR24223">
    <property type="entry name" value="ATP-BINDING CASSETTE SUB-FAMILY C"/>
    <property type="match status" value="1"/>
</dbReference>
<dbReference type="PANTHER" id="PTHR24223:SF196">
    <property type="entry name" value="ATP-BINDING CASSETTE SUB-FAMILY C MEMBER 5"/>
    <property type="match status" value="1"/>
</dbReference>
<dbReference type="Pfam" id="PF00664">
    <property type="entry name" value="ABC_membrane"/>
    <property type="match status" value="2"/>
</dbReference>
<dbReference type="Pfam" id="PF00005">
    <property type="entry name" value="ABC_tran"/>
    <property type="match status" value="2"/>
</dbReference>
<dbReference type="SMART" id="SM00382">
    <property type="entry name" value="AAA"/>
    <property type="match status" value="2"/>
</dbReference>
<dbReference type="SUPFAM" id="SSF90123">
    <property type="entry name" value="ABC transporter transmembrane region"/>
    <property type="match status" value="2"/>
</dbReference>
<dbReference type="SUPFAM" id="SSF52540">
    <property type="entry name" value="P-loop containing nucleoside triphosphate hydrolases"/>
    <property type="match status" value="2"/>
</dbReference>
<dbReference type="PROSITE" id="PS50929">
    <property type="entry name" value="ABC_TM1F"/>
    <property type="match status" value="2"/>
</dbReference>
<dbReference type="PROSITE" id="PS00211">
    <property type="entry name" value="ABC_TRANSPORTER_1"/>
    <property type="match status" value="2"/>
</dbReference>
<dbReference type="PROSITE" id="PS50893">
    <property type="entry name" value="ABC_TRANSPORTER_2"/>
    <property type="match status" value="2"/>
</dbReference>
<keyword id="KW-0067">ATP-binding</keyword>
<keyword id="KW-1003">Cell membrane</keyword>
<keyword id="KW-0903">Direct protein sequencing</keyword>
<keyword id="KW-0967">Endosome</keyword>
<keyword id="KW-0325">Glycoprotein</keyword>
<keyword id="KW-0333">Golgi apparatus</keyword>
<keyword id="KW-0472">Membrane</keyword>
<keyword id="KW-0547">Nucleotide-binding</keyword>
<keyword id="KW-0597">Phosphoprotein</keyword>
<keyword id="KW-1185">Reference proteome</keyword>
<keyword id="KW-0677">Repeat</keyword>
<keyword id="KW-1278">Translocase</keyword>
<keyword id="KW-0812">Transmembrane</keyword>
<keyword id="KW-1133">Transmembrane helix</keyword>
<keyword id="KW-0813">Transport</keyword>
<reference key="1">
    <citation type="journal article" date="2000" name="Gene">
        <title>Detailed structural analysis on both human MRP5 and mouse mrp5 transcripts.</title>
        <authorList>
            <person name="Suzuki T."/>
            <person name="Sasaki H."/>
            <person name="Kuh H.J."/>
            <person name="Agui M."/>
            <person name="Tatsumi Y."/>
            <person name="Tanabe S."/>
            <person name="Terada M."/>
            <person name="Saijo N."/>
            <person name="Nishio K."/>
        </authorList>
    </citation>
    <scope>NUCLEOTIDE SEQUENCE [MRNA]</scope>
    <source>
        <tissue>Brain</tissue>
    </source>
</reference>
<reference key="2">
    <citation type="submission" date="2005-07" db="EMBL/GenBank/DDBJ databases">
        <authorList>
            <person name="Mural R.J."/>
            <person name="Adams M.D."/>
            <person name="Myers E.W."/>
            <person name="Smith H.O."/>
            <person name="Venter J.C."/>
        </authorList>
    </citation>
    <scope>NUCLEOTIDE SEQUENCE [LARGE SCALE GENOMIC DNA]</scope>
</reference>
<reference key="3">
    <citation type="journal article" date="2004" name="Genome Res.">
        <title>The status, quality, and expansion of the NIH full-length cDNA project: the Mammalian Gene Collection (MGC).</title>
        <authorList>
            <consortium name="The MGC Project Team"/>
        </authorList>
    </citation>
    <scope>NUCLEOTIDE SEQUENCE [LARGE SCALE MRNA]</scope>
    <source>
        <strain>C57BL/6J</strain>
        <tissue>Brain</tissue>
    </source>
</reference>
<reference key="4">
    <citation type="submission" date="2009-01" db="UniProtKB">
        <authorList>
            <person name="Lubec G."/>
            <person name="Sunyer B."/>
            <person name="Chen W.-Q."/>
        </authorList>
    </citation>
    <scope>PROTEIN SEQUENCE OF 261-266</scope>
    <scope>IDENTIFICATION BY MASS SPECTROMETRY</scope>
    <source>
        <strain>OF1</strain>
        <tissue>Hippocampus</tissue>
    </source>
</reference>
<reference key="5">
    <citation type="submission" date="1998-03" db="EMBL/GenBank/DDBJ databases">
        <title>Molecular cloning of mouse homologue of SMRP/MRP5.</title>
        <authorList>
            <person name="Suzuki T."/>
            <person name="Kuh H."/>
            <person name="Nishio K."/>
        </authorList>
    </citation>
    <scope>NUCLEOTIDE SEQUENCE [MRNA] OF 1302-1436</scope>
</reference>
<reference key="6">
    <citation type="journal article" date="2006" name="Neuroscience">
        <title>Differential, strain-specific cellular and subcellular distribution of multidrug transporters in murine choroid plexus and blood-brain barrier.</title>
        <authorList>
            <person name="Soontornmalai A."/>
            <person name="Vlaming M.L."/>
            <person name="Fritschy J.M."/>
        </authorList>
    </citation>
    <scope>SUBCELLULAR LOCATION</scope>
    <scope>TISSUE SPECIFICITY</scope>
</reference>
<reference key="7">
    <citation type="journal article" date="2007" name="FEBS J.">
        <title>cGMP transport by vesicles from human and mouse erythrocytes.</title>
        <authorList>
            <person name="de Wolf C.J."/>
            <person name="Yamaguchi H."/>
            <person name="van der Heijden I."/>
            <person name="Wielinga P.R."/>
            <person name="Hundscheid S.L."/>
            <person name="Ono N."/>
            <person name="Scheffer G.L."/>
            <person name="de Haas M."/>
            <person name="Schuetz J.D."/>
            <person name="Wijnholds J."/>
            <person name="Borst P."/>
        </authorList>
    </citation>
    <scope>CATALYTIC ACTIVITY</scope>
    <scope>FUNCTION</scope>
    <scope>BIOPHYSICOCHEMICAL PROPERTIES</scope>
</reference>
<reference key="8">
    <citation type="journal article" date="2009" name="Immunity">
        <title>The phagosomal proteome in interferon-gamma-activated macrophages.</title>
        <authorList>
            <person name="Trost M."/>
            <person name="English L."/>
            <person name="Lemieux S."/>
            <person name="Courcelles M."/>
            <person name="Desjardins M."/>
            <person name="Thibault P."/>
        </authorList>
    </citation>
    <scope>PHOSPHORYLATION [LARGE SCALE ANALYSIS] AT SER-43</scope>
    <scope>IDENTIFICATION BY MASS SPECTROMETRY [LARGE SCALE ANALYSIS]</scope>
</reference>
<reference key="9">
    <citation type="journal article" date="2010" name="Cell">
        <title>A tissue-specific atlas of mouse protein phosphorylation and expression.</title>
        <authorList>
            <person name="Huttlin E.L."/>
            <person name="Jedrychowski M.P."/>
            <person name="Elias J.E."/>
            <person name="Goswami T."/>
            <person name="Rad R."/>
            <person name="Beausoleil S.A."/>
            <person name="Villen J."/>
            <person name="Haas W."/>
            <person name="Sowa M.E."/>
            <person name="Gygi S.P."/>
        </authorList>
    </citation>
    <scope>PHOSPHORYLATION [LARGE SCALE ANALYSIS] AT SER-43; SER-505; SER-509 AND THR-513</scope>
    <scope>IDENTIFICATION BY MASS SPECTROMETRY [LARGE SCALE ANALYSIS]</scope>
    <source>
        <tissue>Brain</tissue>
        <tissue>Brown adipose tissue</tissue>
        <tissue>Kidney</tissue>
        <tissue>Lung</tissue>
        <tissue>Spleen</tissue>
    </source>
</reference>
<reference key="10">
    <citation type="journal article" date="2014" name="Cell Metab.">
        <title>Control of metazoan heme homeostasis by a conserved multidrug resistance protein.</title>
        <authorList>
            <person name="Korolnek T."/>
            <person name="Zhang J."/>
            <person name="Beardsley S."/>
            <person name="Scheffer G.L."/>
            <person name="Hamza I."/>
        </authorList>
    </citation>
    <scope>SUBCELLULAR LOCATION</scope>
</reference>
<reference key="11">
    <citation type="journal article" date="2015" name="J. Biol. Chem.">
        <title>ATP-binding Cassette Subfamily C Member 5 (ABCC5) Functions as an Efflux Transporter of Glutamate Conjugates and Analogs.</title>
        <authorList>
            <person name="Jansen R.S."/>
            <person name="Mahakena S."/>
            <person name="de Haas M."/>
            <person name="Borst P."/>
            <person name="van de Wetering K."/>
        </authorList>
    </citation>
    <scope>DISRUPTION PHENOTYPE</scope>
    <scope>FUNCTION</scope>
</reference>
<reference key="12">
    <citation type="journal article" date="2019" name="Obesity">
        <title>Abcc5 Knockout Mice Have Lower Fat Mass and Increased Levels of Circulating GLP-1.</title>
        <authorList>
            <person name="Cyranka M."/>
            <person name="Veprik A."/>
            <person name="McKay E.J."/>
            <person name="van Loon N."/>
            <person name="Thijsse A."/>
            <person name="Cotter L."/>
            <person name="Hare N."/>
            <person name="Saibudeen A."/>
            <person name="Lingam S."/>
            <person name="Pires E."/>
            <person name="Larraufie P."/>
            <person name="Reimann F."/>
            <person name="Gribble F."/>
            <person name="Stewart M."/>
            <person name="Bentley E."/>
            <person name="Lear P."/>
            <person name="McCullagh J."/>
            <person name="Cantley J."/>
            <person name="Cox R.D."/>
            <person name="de Wet H."/>
        </authorList>
    </citation>
    <scope>DISRUPTION PHENOTYPE</scope>
    <scope>FUNCTION</scope>
</reference>